<reference key="1">
    <citation type="journal article" date="2000" name="DNA Res.">
        <title>Structural analysis of Arabidopsis thaliana chromosome 3. I. Sequence features of the regions of 4,504,864 bp covered by sixty P1 and TAC clones.</title>
        <authorList>
            <person name="Sato S."/>
            <person name="Nakamura Y."/>
            <person name="Kaneko T."/>
            <person name="Katoh T."/>
            <person name="Asamizu E."/>
            <person name="Tabata S."/>
        </authorList>
    </citation>
    <scope>NUCLEOTIDE SEQUENCE [LARGE SCALE GENOMIC DNA]</scope>
    <source>
        <strain>cv. Columbia</strain>
    </source>
</reference>
<reference key="2">
    <citation type="journal article" date="2017" name="Plant J.">
        <title>Araport11: a complete reannotation of the Arabidopsis thaliana reference genome.</title>
        <authorList>
            <person name="Cheng C.Y."/>
            <person name="Krishnakumar V."/>
            <person name="Chan A.P."/>
            <person name="Thibaud-Nissen F."/>
            <person name="Schobel S."/>
            <person name="Town C.D."/>
        </authorList>
    </citation>
    <scope>GENOME REANNOTATION</scope>
    <source>
        <strain>cv. Columbia</strain>
    </source>
</reference>
<reference key="3">
    <citation type="journal article" date="2003" name="Science">
        <title>Empirical analysis of transcriptional activity in the Arabidopsis genome.</title>
        <authorList>
            <person name="Yamada K."/>
            <person name="Lim J."/>
            <person name="Dale J.M."/>
            <person name="Chen H."/>
            <person name="Shinn P."/>
            <person name="Palm C.J."/>
            <person name="Southwick A.M."/>
            <person name="Wu H.C."/>
            <person name="Kim C.J."/>
            <person name="Nguyen M."/>
            <person name="Pham P.K."/>
            <person name="Cheuk R.F."/>
            <person name="Karlin-Newmann G."/>
            <person name="Liu S.X."/>
            <person name="Lam B."/>
            <person name="Sakano H."/>
            <person name="Wu T."/>
            <person name="Yu G."/>
            <person name="Miranda M."/>
            <person name="Quach H.L."/>
            <person name="Tripp M."/>
            <person name="Chang C.H."/>
            <person name="Lee J.M."/>
            <person name="Toriumi M.J."/>
            <person name="Chan M.M."/>
            <person name="Tang C.C."/>
            <person name="Onodera C.S."/>
            <person name="Deng J.M."/>
            <person name="Akiyama K."/>
            <person name="Ansari Y."/>
            <person name="Arakawa T."/>
            <person name="Banh J."/>
            <person name="Banno F."/>
            <person name="Bowser L."/>
            <person name="Brooks S.Y."/>
            <person name="Carninci P."/>
            <person name="Chao Q."/>
            <person name="Choy N."/>
            <person name="Enju A."/>
            <person name="Goldsmith A.D."/>
            <person name="Gurjal M."/>
            <person name="Hansen N.F."/>
            <person name="Hayashizaki Y."/>
            <person name="Johnson-Hopson C."/>
            <person name="Hsuan V.W."/>
            <person name="Iida K."/>
            <person name="Karnes M."/>
            <person name="Khan S."/>
            <person name="Koesema E."/>
            <person name="Ishida J."/>
            <person name="Jiang P.X."/>
            <person name="Jones T."/>
            <person name="Kawai J."/>
            <person name="Kamiya A."/>
            <person name="Meyers C."/>
            <person name="Nakajima M."/>
            <person name="Narusaka M."/>
            <person name="Seki M."/>
            <person name="Sakurai T."/>
            <person name="Satou M."/>
            <person name="Tamse R."/>
            <person name="Vaysberg M."/>
            <person name="Wallender E.K."/>
            <person name="Wong C."/>
            <person name="Yamamura Y."/>
            <person name="Yuan S."/>
            <person name="Shinozaki K."/>
            <person name="Davis R.W."/>
            <person name="Theologis A."/>
            <person name="Ecker J.R."/>
        </authorList>
    </citation>
    <scope>NUCLEOTIDE SEQUENCE [LARGE SCALE MRNA]</scope>
    <source>
        <strain>cv. Columbia</strain>
    </source>
</reference>
<reference key="4">
    <citation type="submission" date="2006-07" db="EMBL/GenBank/DDBJ databases">
        <title>Large-scale analysis of RIKEN Arabidopsis full-length (RAFL) cDNAs.</title>
        <authorList>
            <person name="Totoki Y."/>
            <person name="Seki M."/>
            <person name="Ishida J."/>
            <person name="Nakajima M."/>
            <person name="Enju A."/>
            <person name="Kamiya A."/>
            <person name="Narusaka M."/>
            <person name="Shin-i T."/>
            <person name="Nakagawa M."/>
            <person name="Sakamoto N."/>
            <person name="Oishi K."/>
            <person name="Kohara Y."/>
            <person name="Kobayashi M."/>
            <person name="Toyoda A."/>
            <person name="Sakaki Y."/>
            <person name="Sakurai T."/>
            <person name="Iida K."/>
            <person name="Akiyama K."/>
            <person name="Satou M."/>
            <person name="Toyoda T."/>
            <person name="Konagaya A."/>
            <person name="Carninci P."/>
            <person name="Kawai J."/>
            <person name="Hayashizaki Y."/>
            <person name="Shinozaki K."/>
        </authorList>
    </citation>
    <scope>NUCLEOTIDE SEQUENCE [LARGE SCALE MRNA]</scope>
    <source>
        <strain>cv. Columbia</strain>
    </source>
</reference>
<reference key="5">
    <citation type="journal article" date="2008" name="Planta">
        <title>Expression profiling of four RelA/SpoT-like proteins, homologues of bacterial stringent factors, in Arabidopsis thaliana.</title>
        <authorList>
            <person name="Mizusawa K."/>
            <person name="Masuda S."/>
            <person name="Ohta H."/>
        </authorList>
    </citation>
    <scope>FUNCTION</scope>
    <scope>TISSUE SPECIFICITY</scope>
    <scope>INDUCTION</scope>
</reference>
<reference key="6">
    <citation type="journal article" date="2008" name="Plant Cell Physiol.">
        <title>The bacterial stringent response, conserved in chloroplasts, controls plant fertilization.</title>
        <authorList>
            <person name="Masuda S."/>
            <person name="Mizusawa K."/>
            <person name="Narisawa T."/>
            <person name="Tozawa Y."/>
            <person name="Ohta H."/>
            <person name="Takamiya K."/>
        </authorList>
    </citation>
    <scope>FUNCTION</scope>
    <scope>ACTIVITY REGULATION</scope>
    <scope>SUBCELLULAR LOCATION</scope>
    <scope>TISSUE SPECIFICITY</scope>
</reference>
<proteinExistence type="evidence at transcript level"/>
<gene>
    <name type="primary">CRSH</name>
    <name type="ordered locus">At3g17470</name>
    <name type="ORF">MKP6.2</name>
</gene>
<protein>
    <recommendedName>
        <fullName>Probable GTP diphosphokinase CRSH, chloroplastic</fullName>
        <ecNumber>2.7.6.5</ecNumber>
    </recommendedName>
    <alternativeName>
        <fullName>Calcium-activated RelA/Spot homolog</fullName>
        <shortName>AtCRSH</shortName>
    </alternativeName>
    <alternativeName>
        <fullName>ppGpp synthetase CRSH</fullName>
    </alternativeName>
</protein>
<evidence type="ECO:0000250" key="1"/>
<evidence type="ECO:0000255" key="2"/>
<evidence type="ECO:0000255" key="3">
    <source>
        <dbReference type="PROSITE-ProRule" id="PRU00448"/>
    </source>
</evidence>
<evidence type="ECO:0000255" key="4">
    <source>
        <dbReference type="PROSITE-ProRule" id="PRU01175"/>
    </source>
</evidence>
<evidence type="ECO:0000269" key="5">
    <source>
    </source>
</evidence>
<evidence type="ECO:0000269" key="6">
    <source>
    </source>
</evidence>
<evidence type="ECO:0000305" key="7"/>
<evidence type="ECO:0000305" key="8">
    <source>
    </source>
</evidence>
<dbReference type="EC" id="2.7.6.5"/>
<dbReference type="EMBL" id="AB022219">
    <property type="protein sequence ID" value="BAB02036.1"/>
    <property type="status" value="ALT_SEQ"/>
    <property type="molecule type" value="Genomic_DNA"/>
</dbReference>
<dbReference type="EMBL" id="CP002686">
    <property type="protein sequence ID" value="AEE75958.1"/>
    <property type="molecule type" value="Genomic_DNA"/>
</dbReference>
<dbReference type="EMBL" id="BT006180">
    <property type="protein sequence ID" value="AAP04163.1"/>
    <property type="molecule type" value="mRNA"/>
</dbReference>
<dbReference type="EMBL" id="AK228656">
    <property type="protein sequence ID" value="BAF00563.1"/>
    <property type="molecule type" value="mRNA"/>
</dbReference>
<dbReference type="RefSeq" id="NP_188374.2">
    <property type="nucleotide sequence ID" value="NM_112627.4"/>
</dbReference>
<dbReference type="SMR" id="Q84R11"/>
<dbReference type="FunCoup" id="Q84R11">
    <property type="interactions" value="1432"/>
</dbReference>
<dbReference type="STRING" id="3702.Q84R11"/>
<dbReference type="iPTMnet" id="Q84R11"/>
<dbReference type="PaxDb" id="3702-AT3G17470.1"/>
<dbReference type="ProteomicsDB" id="224511"/>
<dbReference type="EnsemblPlants" id="AT3G17470.1">
    <property type="protein sequence ID" value="AT3G17470.1"/>
    <property type="gene ID" value="AT3G17470"/>
</dbReference>
<dbReference type="GeneID" id="821012"/>
<dbReference type="Gramene" id="AT3G17470.1">
    <property type="protein sequence ID" value="AT3G17470.1"/>
    <property type="gene ID" value="AT3G17470"/>
</dbReference>
<dbReference type="KEGG" id="ath:AT3G17470"/>
<dbReference type="Araport" id="AT3G17470"/>
<dbReference type="TAIR" id="AT3G17470">
    <property type="gene designation" value="CRSH"/>
</dbReference>
<dbReference type="eggNOG" id="KOG1157">
    <property type="taxonomic scope" value="Eukaryota"/>
</dbReference>
<dbReference type="HOGENOM" id="CLU_022292_1_0_1"/>
<dbReference type="InParanoid" id="Q84R11"/>
<dbReference type="PhylomeDB" id="Q84R11"/>
<dbReference type="BioCyc" id="ARA:AT3G17470-MONOMER"/>
<dbReference type="PRO" id="PR:Q84R11"/>
<dbReference type="Proteomes" id="UP000006548">
    <property type="component" value="Chromosome 3"/>
</dbReference>
<dbReference type="ExpressionAtlas" id="Q84R11">
    <property type="expression patterns" value="baseline and differential"/>
</dbReference>
<dbReference type="GO" id="GO:0009507">
    <property type="term" value="C:chloroplast"/>
    <property type="evidence" value="ECO:0000314"/>
    <property type="project" value="TAIR"/>
</dbReference>
<dbReference type="GO" id="GO:0005524">
    <property type="term" value="F:ATP binding"/>
    <property type="evidence" value="ECO:0007669"/>
    <property type="project" value="UniProtKB-KW"/>
</dbReference>
<dbReference type="GO" id="GO:0005509">
    <property type="term" value="F:calcium ion binding"/>
    <property type="evidence" value="ECO:0007669"/>
    <property type="project" value="InterPro"/>
</dbReference>
<dbReference type="GO" id="GO:0005525">
    <property type="term" value="F:GTP binding"/>
    <property type="evidence" value="ECO:0007669"/>
    <property type="project" value="UniProtKB-KW"/>
</dbReference>
<dbReference type="GO" id="GO:0008728">
    <property type="term" value="F:GTP diphosphokinase activity"/>
    <property type="evidence" value="ECO:0007669"/>
    <property type="project" value="UniProtKB-EC"/>
</dbReference>
<dbReference type="GO" id="GO:0016301">
    <property type="term" value="F:kinase activity"/>
    <property type="evidence" value="ECO:0007669"/>
    <property type="project" value="UniProtKB-KW"/>
</dbReference>
<dbReference type="GO" id="GO:0015969">
    <property type="term" value="P:guanosine tetraphosphate metabolic process"/>
    <property type="evidence" value="ECO:0007669"/>
    <property type="project" value="InterPro"/>
</dbReference>
<dbReference type="CDD" id="cd05399">
    <property type="entry name" value="NT_Rel-Spo_like"/>
    <property type="match status" value="1"/>
</dbReference>
<dbReference type="FunFam" id="1.10.238.10:FF:000287">
    <property type="entry name" value="Probable GTP diphosphokinase CRSH, chloroplastic"/>
    <property type="match status" value="1"/>
</dbReference>
<dbReference type="FunFam" id="1.10.3210.10:FF:000019">
    <property type="entry name" value="Probable GTP diphosphokinase CRSH, chloroplastic"/>
    <property type="match status" value="1"/>
</dbReference>
<dbReference type="FunFam" id="3.30.460.10:FF:000025">
    <property type="entry name" value="probable GTP diphosphokinase CRSH, chloroplastic"/>
    <property type="match status" value="1"/>
</dbReference>
<dbReference type="Gene3D" id="3.30.460.10">
    <property type="entry name" value="Beta Polymerase, domain 2"/>
    <property type="match status" value="1"/>
</dbReference>
<dbReference type="Gene3D" id="1.10.238.10">
    <property type="entry name" value="EF-hand"/>
    <property type="match status" value="1"/>
</dbReference>
<dbReference type="Gene3D" id="1.10.3210.10">
    <property type="entry name" value="Hypothetical protein af1432"/>
    <property type="match status" value="1"/>
</dbReference>
<dbReference type="InterPro" id="IPR011992">
    <property type="entry name" value="EF-hand-dom_pair"/>
</dbReference>
<dbReference type="InterPro" id="IPR018247">
    <property type="entry name" value="EF_Hand_1_Ca_BS"/>
</dbReference>
<dbReference type="InterPro" id="IPR002048">
    <property type="entry name" value="EF_hand_dom"/>
</dbReference>
<dbReference type="InterPro" id="IPR006674">
    <property type="entry name" value="HD_domain"/>
</dbReference>
<dbReference type="InterPro" id="IPR043519">
    <property type="entry name" value="NT_sf"/>
</dbReference>
<dbReference type="InterPro" id="IPR007685">
    <property type="entry name" value="RelA_SpoT"/>
</dbReference>
<dbReference type="PANTHER" id="PTHR21262:SF12">
    <property type="entry name" value="GTP DIPHOSPHOKINASE CRSH, CHLOROPLASTIC-RELATED"/>
    <property type="match status" value="1"/>
</dbReference>
<dbReference type="PANTHER" id="PTHR21262">
    <property type="entry name" value="GUANOSINE-3',5'-BIS DIPHOSPHATE 3'-PYROPHOSPHOHYDROLASE"/>
    <property type="match status" value="1"/>
</dbReference>
<dbReference type="Pfam" id="PF13499">
    <property type="entry name" value="EF-hand_7"/>
    <property type="match status" value="1"/>
</dbReference>
<dbReference type="Pfam" id="PF13328">
    <property type="entry name" value="HD_4"/>
    <property type="match status" value="1"/>
</dbReference>
<dbReference type="Pfam" id="PF04607">
    <property type="entry name" value="RelA_SpoT"/>
    <property type="match status" value="1"/>
</dbReference>
<dbReference type="SMART" id="SM00054">
    <property type="entry name" value="EFh"/>
    <property type="match status" value="2"/>
</dbReference>
<dbReference type="SMART" id="SM00954">
    <property type="entry name" value="RelA_SpoT"/>
    <property type="match status" value="1"/>
</dbReference>
<dbReference type="SUPFAM" id="SSF47473">
    <property type="entry name" value="EF-hand"/>
    <property type="match status" value="1"/>
</dbReference>
<dbReference type="SUPFAM" id="SSF109604">
    <property type="entry name" value="HD-domain/PDEase-like"/>
    <property type="match status" value="1"/>
</dbReference>
<dbReference type="SUPFAM" id="SSF81301">
    <property type="entry name" value="Nucleotidyltransferase"/>
    <property type="match status" value="1"/>
</dbReference>
<dbReference type="PROSITE" id="PS00018">
    <property type="entry name" value="EF_HAND_1"/>
    <property type="match status" value="2"/>
</dbReference>
<dbReference type="PROSITE" id="PS50222">
    <property type="entry name" value="EF_HAND_2"/>
    <property type="match status" value="2"/>
</dbReference>
<dbReference type="PROSITE" id="PS51831">
    <property type="entry name" value="HD"/>
    <property type="match status" value="1"/>
</dbReference>
<accession>Q84R11</accession>
<accession>Q9LUQ0</accession>
<sequence>MSVIRPSPIPIPRCRSQVLHRRLYSIQLIQRRRRRWNPRSEVEDTAIESTARSPEAAGGKMVVELVGAFNEVTERMNSVWLSTSSSRLLFKALKLSIPILQSLPLASDGRSPLSKALSLSIILADLQMDAEVISASILSEVVDANAISIYEVRDHIGTGTAHLLHEIFRVKNIPFKVDVLDDETAASLRKFYLTYYDIRAVIMDLVSKLDEMRHLDHLPRYRQQILSLEVLKIYSPLAHAVGANHLSLELEDISFRYLFPCSYIYLDSWLRGHENGSKPLIDVYKEQLHRSLKDDLVLAEMVNDVYIKGRYKSRYSMMKKLLRDGRKPEEVNDVLGLRVILMPNSVVNDVEVGEKACYRTSEIIRSLWKEIPHRTKDYIARPKENGYRSLHMAVDVSDSDQIRPLMEIQIRTMDMDGSANAGTASHSLYKGGLTDPKEAKRLKAIMLAAADLAAIRLKDISSNKHQSFKTTTNQRDRVFCLLDKNGDGMISIEELMEVMEELGAPGEDAEEMMQLLDSNSDGSLSSDEFDTFQKQVEFMRKWEDRDNEYKSLLDEKLHDLPHQDTTGLIQLYNKELEDRLSTH</sequence>
<keyword id="KW-0067">ATP-binding</keyword>
<keyword id="KW-0106">Calcium</keyword>
<keyword id="KW-0150">Chloroplast</keyword>
<keyword id="KW-0342">GTP-binding</keyword>
<keyword id="KW-0418">Kinase</keyword>
<keyword id="KW-0479">Metal-binding</keyword>
<keyword id="KW-0547">Nucleotide-binding</keyword>
<keyword id="KW-0934">Plastid</keyword>
<keyword id="KW-1185">Reference proteome</keyword>
<keyword id="KW-0677">Repeat</keyword>
<keyword id="KW-0346">Stress response</keyword>
<keyword id="KW-0808">Transferase</keyword>
<keyword id="KW-0809">Transit peptide</keyword>
<name>CRSH_ARATH</name>
<comment type="function">
    <text evidence="5 6">Possesses calcium-dependent ppGpp (guanosine 3'-diphosphate 5'-diphosphate) synthetase activity in vitro and is able to functionally complement E.coli relA mutants. Plays an important role in the timing adjustment of pistil and pollen maturation required for successful pollination. May be involved in a rapid plant ppGpp-mediated response to pathogens and other stresses.</text>
</comment>
<comment type="catalytic activity">
    <reaction>
        <text>GTP + ATP = guanosine 3'-diphosphate 5'-triphosphate + AMP</text>
        <dbReference type="Rhea" id="RHEA:22088"/>
        <dbReference type="ChEBI" id="CHEBI:30616"/>
        <dbReference type="ChEBI" id="CHEBI:37565"/>
        <dbReference type="ChEBI" id="CHEBI:142410"/>
        <dbReference type="ChEBI" id="CHEBI:456215"/>
        <dbReference type="EC" id="2.7.6.5"/>
    </reaction>
</comment>
<comment type="activity regulation">
    <text evidence="5">Activated by calcium.</text>
</comment>
<comment type="subcellular location">
    <subcellularLocation>
        <location evidence="5">Plastid</location>
        <location evidence="5">Chloroplast</location>
    </subcellularLocation>
</comment>
<comment type="tissue specificity">
    <text evidence="5 6">Expressed in shoots, cotyledons, rosette and cauline leaves, stems, sepals, pistils and siliques.</text>
</comment>
<comment type="induction">
    <text evidence="6">Circadian-regulation with a peak at midnight.</text>
</comment>
<comment type="domain">
    <text>The calcium-binding sites of the 2 EF-hand domains are required for enzyme activity.</text>
</comment>
<comment type="miscellaneous">
    <text evidence="8">Plants silencing CRSH have abnormally small siliques with few seeds, due to altered timing of pistil and pollen maturation and unsuccessful pollination.</text>
</comment>
<comment type="similarity">
    <text evidence="7">Belongs to the RelA/SpoT family.</text>
</comment>
<comment type="sequence caution" evidence="7">
    <conflict type="erroneous gene model prediction">
        <sequence resource="EMBL-CDS" id="BAB02036"/>
    </conflict>
</comment>
<feature type="transit peptide" description="Chloroplast" evidence="2">
    <location>
        <begin position="1"/>
        <end position="58"/>
    </location>
</feature>
<feature type="chain" id="PRO_0000429853" description="Probable GTP diphosphokinase CRSH, chloroplastic">
    <location>
        <begin position="59"/>
        <end position="583"/>
    </location>
</feature>
<feature type="domain" description="HD" evidence="4">
    <location>
        <begin position="112"/>
        <end position="212"/>
    </location>
</feature>
<feature type="domain" description="EF-hand 1" evidence="3">
    <location>
        <begin position="470"/>
        <end position="505"/>
    </location>
</feature>
<feature type="domain" description="EF-hand 2" evidence="3">
    <location>
        <begin position="507"/>
        <end position="539"/>
    </location>
</feature>
<feature type="binding site" evidence="3">
    <location>
        <position position="483"/>
    </location>
    <ligand>
        <name>Ca(2+)</name>
        <dbReference type="ChEBI" id="CHEBI:29108"/>
        <label>1</label>
    </ligand>
</feature>
<feature type="binding site" evidence="3">
    <location>
        <position position="485"/>
    </location>
    <ligand>
        <name>Ca(2+)</name>
        <dbReference type="ChEBI" id="CHEBI:29108"/>
        <label>1</label>
    </ligand>
</feature>
<feature type="binding site" evidence="3">
    <location>
        <position position="487"/>
    </location>
    <ligand>
        <name>Ca(2+)</name>
        <dbReference type="ChEBI" id="CHEBI:29108"/>
        <label>1</label>
    </ligand>
</feature>
<feature type="binding site" evidence="3">
    <location>
        <position position="489"/>
    </location>
    <ligand>
        <name>Ca(2+)</name>
        <dbReference type="ChEBI" id="CHEBI:29108"/>
        <label>1</label>
    </ligand>
</feature>
<feature type="binding site" evidence="3">
    <location>
        <position position="494"/>
    </location>
    <ligand>
        <name>Ca(2+)</name>
        <dbReference type="ChEBI" id="CHEBI:29108"/>
        <label>1</label>
    </ligand>
</feature>
<feature type="binding site" evidence="3">
    <location>
        <position position="517"/>
    </location>
    <ligand>
        <name>Ca(2+)</name>
        <dbReference type="ChEBI" id="CHEBI:29108"/>
        <label>2</label>
    </ligand>
</feature>
<feature type="binding site" evidence="3">
    <location>
        <position position="519"/>
    </location>
    <ligand>
        <name>Ca(2+)</name>
        <dbReference type="ChEBI" id="CHEBI:29108"/>
        <label>2</label>
    </ligand>
</feature>
<feature type="binding site" evidence="3">
    <location>
        <position position="521"/>
    </location>
    <ligand>
        <name>Ca(2+)</name>
        <dbReference type="ChEBI" id="CHEBI:29108"/>
        <label>2</label>
    </ligand>
</feature>
<feature type="binding site" evidence="3">
    <location>
        <position position="523"/>
    </location>
    <ligand>
        <name>Ca(2+)</name>
        <dbReference type="ChEBI" id="CHEBI:29108"/>
        <label>2</label>
    </ligand>
</feature>
<feature type="binding site" evidence="3">
    <location>
        <position position="528"/>
    </location>
    <ligand>
        <name>Ca(2+)</name>
        <dbReference type="ChEBI" id="CHEBI:29108"/>
        <label>2</label>
    </ligand>
</feature>
<feature type="site" description="Required for ppGpp synthetase activity" evidence="1">
    <location>
        <position position="309"/>
    </location>
</feature>
<organism>
    <name type="scientific">Arabidopsis thaliana</name>
    <name type="common">Mouse-ear cress</name>
    <dbReference type="NCBI Taxonomy" id="3702"/>
    <lineage>
        <taxon>Eukaryota</taxon>
        <taxon>Viridiplantae</taxon>
        <taxon>Streptophyta</taxon>
        <taxon>Embryophyta</taxon>
        <taxon>Tracheophyta</taxon>
        <taxon>Spermatophyta</taxon>
        <taxon>Magnoliopsida</taxon>
        <taxon>eudicotyledons</taxon>
        <taxon>Gunneridae</taxon>
        <taxon>Pentapetalae</taxon>
        <taxon>rosids</taxon>
        <taxon>malvids</taxon>
        <taxon>Brassicales</taxon>
        <taxon>Brassicaceae</taxon>
        <taxon>Camelineae</taxon>
        <taxon>Arabidopsis</taxon>
    </lineage>
</organism>